<evidence type="ECO:0000255" key="1">
    <source>
        <dbReference type="HAMAP-Rule" id="MF_01064"/>
    </source>
</evidence>
<accession>Q8ZH47</accession>
<accession>Q0WHY0</accession>
<reference key="1">
    <citation type="journal article" date="2001" name="Nature">
        <title>Genome sequence of Yersinia pestis, the causative agent of plague.</title>
        <authorList>
            <person name="Parkhill J."/>
            <person name="Wren B.W."/>
            <person name="Thomson N.R."/>
            <person name="Titball R.W."/>
            <person name="Holden M.T.G."/>
            <person name="Prentice M.B."/>
            <person name="Sebaihia M."/>
            <person name="James K.D."/>
            <person name="Churcher C.M."/>
            <person name="Mungall K.L."/>
            <person name="Baker S."/>
            <person name="Basham D."/>
            <person name="Bentley S.D."/>
            <person name="Brooks K."/>
            <person name="Cerdeno-Tarraga A.-M."/>
            <person name="Chillingworth T."/>
            <person name="Cronin A."/>
            <person name="Davies R.M."/>
            <person name="Davis P."/>
            <person name="Dougan G."/>
            <person name="Feltwell T."/>
            <person name="Hamlin N."/>
            <person name="Holroyd S."/>
            <person name="Jagels K."/>
            <person name="Karlyshev A.V."/>
            <person name="Leather S."/>
            <person name="Moule S."/>
            <person name="Oyston P.C.F."/>
            <person name="Quail M.A."/>
            <person name="Rutherford K.M."/>
            <person name="Simmonds M."/>
            <person name="Skelton J."/>
            <person name="Stevens K."/>
            <person name="Whitehead S."/>
            <person name="Barrell B.G."/>
        </authorList>
    </citation>
    <scope>NUCLEOTIDE SEQUENCE [LARGE SCALE GENOMIC DNA]</scope>
    <source>
        <strain>CO-92 / Biovar Orientalis</strain>
    </source>
</reference>
<reference key="2">
    <citation type="journal article" date="2002" name="J. Bacteriol.">
        <title>Genome sequence of Yersinia pestis KIM.</title>
        <authorList>
            <person name="Deng W."/>
            <person name="Burland V."/>
            <person name="Plunkett G. III"/>
            <person name="Boutin A."/>
            <person name="Mayhew G.F."/>
            <person name="Liss P."/>
            <person name="Perna N.T."/>
            <person name="Rose D.J."/>
            <person name="Mau B."/>
            <person name="Zhou S."/>
            <person name="Schwartz D.C."/>
            <person name="Fetherston J.D."/>
            <person name="Lindler L.E."/>
            <person name="Brubaker R.R."/>
            <person name="Plano G.V."/>
            <person name="Straley S.C."/>
            <person name="McDonough K.A."/>
            <person name="Nilles M.L."/>
            <person name="Matson J.S."/>
            <person name="Blattner F.R."/>
            <person name="Perry R.D."/>
        </authorList>
    </citation>
    <scope>NUCLEOTIDE SEQUENCE [LARGE SCALE GENOMIC DNA]</scope>
    <source>
        <strain>KIM10+ / Biovar Mediaevalis</strain>
    </source>
</reference>
<reference key="3">
    <citation type="journal article" date="2004" name="DNA Res.">
        <title>Complete genome sequence of Yersinia pestis strain 91001, an isolate avirulent to humans.</title>
        <authorList>
            <person name="Song Y."/>
            <person name="Tong Z."/>
            <person name="Wang J."/>
            <person name="Wang L."/>
            <person name="Guo Z."/>
            <person name="Han Y."/>
            <person name="Zhang J."/>
            <person name="Pei D."/>
            <person name="Zhou D."/>
            <person name="Qin H."/>
            <person name="Pang X."/>
            <person name="Han Y."/>
            <person name="Zhai J."/>
            <person name="Li M."/>
            <person name="Cui B."/>
            <person name="Qi Z."/>
            <person name="Jin L."/>
            <person name="Dai R."/>
            <person name="Chen F."/>
            <person name="Li S."/>
            <person name="Ye C."/>
            <person name="Du Z."/>
            <person name="Lin W."/>
            <person name="Wang J."/>
            <person name="Yu J."/>
            <person name="Yang H."/>
            <person name="Wang J."/>
            <person name="Huang P."/>
            <person name="Yang R."/>
        </authorList>
    </citation>
    <scope>NUCLEOTIDE SEQUENCE [LARGE SCALE GENOMIC DNA]</scope>
    <source>
        <strain>91001 / Biovar Mediaevalis</strain>
    </source>
</reference>
<gene>
    <name type="ordered locus">YPO1064.1</name>
    <name type="ordered locus">y3113</name>
    <name type="ordered locus">YP_2785</name>
    <name type="ORF">YPO1064a</name>
</gene>
<name>Y1064_YERPE</name>
<dbReference type="EMBL" id="AL590842">
    <property type="protein sequence ID" value="CAL19730.1"/>
    <property type="molecule type" value="Genomic_DNA"/>
</dbReference>
<dbReference type="EMBL" id="AE009952">
    <property type="protein sequence ID" value="AAM86663.1"/>
    <property type="molecule type" value="Genomic_DNA"/>
</dbReference>
<dbReference type="EMBL" id="AE017042">
    <property type="protein sequence ID" value="AAS62969.1"/>
    <property type="molecule type" value="Genomic_DNA"/>
</dbReference>
<dbReference type="PIR" id="AH0130">
    <property type="entry name" value="AH0130"/>
</dbReference>
<dbReference type="RefSeq" id="WP_002212152.1">
    <property type="nucleotide sequence ID" value="NZ_WUCM01000044.1"/>
</dbReference>
<dbReference type="RefSeq" id="YP_002346108.1">
    <property type="nucleotide sequence ID" value="NC_003143.1"/>
</dbReference>
<dbReference type="SMR" id="Q8ZH47"/>
<dbReference type="STRING" id="214092.YPO1064a"/>
<dbReference type="PaxDb" id="214092-YPO1064a"/>
<dbReference type="DNASU" id="1148060"/>
<dbReference type="EnsemblBacteria" id="AAS62969">
    <property type="protein sequence ID" value="AAS62969"/>
    <property type="gene ID" value="YP_2785"/>
</dbReference>
<dbReference type="KEGG" id="ype:YPO1064a"/>
<dbReference type="KEGG" id="ypk:y3113"/>
<dbReference type="KEGG" id="ypm:YP_2785"/>
<dbReference type="PATRIC" id="fig|214092.21.peg.1353"/>
<dbReference type="eggNOG" id="ENOG5032Z3X">
    <property type="taxonomic scope" value="Bacteria"/>
</dbReference>
<dbReference type="HOGENOM" id="CLU_190008_0_0_6"/>
<dbReference type="OMA" id="CVLKTLD"/>
<dbReference type="OrthoDB" id="5900992at2"/>
<dbReference type="Proteomes" id="UP000000815">
    <property type="component" value="Chromosome"/>
</dbReference>
<dbReference type="Proteomes" id="UP000001019">
    <property type="component" value="Chromosome"/>
</dbReference>
<dbReference type="Proteomes" id="UP000002490">
    <property type="component" value="Chromosome"/>
</dbReference>
<dbReference type="HAMAP" id="MF_01064">
    <property type="entry name" value="UPF0253"/>
    <property type="match status" value="1"/>
</dbReference>
<dbReference type="InterPro" id="IPR009624">
    <property type="entry name" value="UPF0253"/>
</dbReference>
<dbReference type="NCBIfam" id="NF003436">
    <property type="entry name" value="PRK04964.1"/>
    <property type="match status" value="1"/>
</dbReference>
<dbReference type="Pfam" id="PF06786">
    <property type="entry name" value="UPF0253"/>
    <property type="match status" value="1"/>
</dbReference>
<protein>
    <recommendedName>
        <fullName evidence="1">UPF0253 protein YPO1064.1/y3113/YP_2785</fullName>
    </recommendedName>
</protein>
<proteinExistence type="inferred from homology"/>
<feature type="chain" id="PRO_0000215550" description="UPF0253 protein YPO1064.1/y3113/YP_2785">
    <location>
        <begin position="1"/>
        <end position="66"/>
    </location>
</feature>
<keyword id="KW-1185">Reference proteome</keyword>
<comment type="similarity">
    <text evidence="1">Belongs to the UPF0253 family.</text>
</comment>
<sequence length="66" mass="7228">MQQYCELVRRFYAEIGSGDLGYVPDALRCVLKALDEVAANDALPSSVREQAAYAAANLLVSDYVDE</sequence>
<organism>
    <name type="scientific">Yersinia pestis</name>
    <dbReference type="NCBI Taxonomy" id="632"/>
    <lineage>
        <taxon>Bacteria</taxon>
        <taxon>Pseudomonadati</taxon>
        <taxon>Pseudomonadota</taxon>
        <taxon>Gammaproteobacteria</taxon>
        <taxon>Enterobacterales</taxon>
        <taxon>Yersiniaceae</taxon>
        <taxon>Yersinia</taxon>
    </lineage>
</organism>